<reference key="1">
    <citation type="journal article" date="1997" name="Nature">
        <title>The complete genome sequence of the hyperthermophilic, sulphate-reducing archaeon Archaeoglobus fulgidus.</title>
        <authorList>
            <person name="Klenk H.-P."/>
            <person name="Clayton R.A."/>
            <person name="Tomb J.-F."/>
            <person name="White O."/>
            <person name="Nelson K.E."/>
            <person name="Ketchum K.A."/>
            <person name="Dodson R.J."/>
            <person name="Gwinn M.L."/>
            <person name="Hickey E.K."/>
            <person name="Peterson J.D."/>
            <person name="Richardson D.L."/>
            <person name="Kerlavage A.R."/>
            <person name="Graham D.E."/>
            <person name="Kyrpides N.C."/>
            <person name="Fleischmann R.D."/>
            <person name="Quackenbush J."/>
            <person name="Lee N.H."/>
            <person name="Sutton G.G."/>
            <person name="Gill S.R."/>
            <person name="Kirkness E.F."/>
            <person name="Dougherty B.A."/>
            <person name="McKenney K."/>
            <person name="Adams M.D."/>
            <person name="Loftus B.J."/>
            <person name="Peterson S.N."/>
            <person name="Reich C.I."/>
            <person name="McNeil L.K."/>
            <person name="Badger J.H."/>
            <person name="Glodek A."/>
            <person name="Zhou L."/>
            <person name="Overbeek R."/>
            <person name="Gocayne J.D."/>
            <person name="Weidman J.F."/>
            <person name="McDonald L.A."/>
            <person name="Utterback T.R."/>
            <person name="Cotton M.D."/>
            <person name="Spriggs T."/>
            <person name="Artiach P."/>
            <person name="Kaine B.P."/>
            <person name="Sykes S.M."/>
            <person name="Sadow P.W."/>
            <person name="D'Andrea K.P."/>
            <person name="Bowman C."/>
            <person name="Fujii C."/>
            <person name="Garland S.A."/>
            <person name="Mason T.M."/>
            <person name="Olsen G.J."/>
            <person name="Fraser C.M."/>
            <person name="Smith H.O."/>
            <person name="Woese C.R."/>
            <person name="Venter J.C."/>
        </authorList>
    </citation>
    <scope>NUCLEOTIDE SEQUENCE [LARGE SCALE GENOMIC DNA]</scope>
    <source>
        <strain>ATCC 49558 / DSM 4304 / JCM 9628 / NBRC 100126 / VC-16</strain>
    </source>
</reference>
<proteinExistence type="predicted"/>
<keyword id="KW-1185">Reference proteome</keyword>
<name>Y414_ARCFU</name>
<feature type="chain" id="PRO_0000127873" description="Uncharacterized protein AF_0414">
    <location>
        <begin position="1"/>
        <end position="144"/>
    </location>
</feature>
<accession>O29833</accession>
<sequence length="144" mass="16262">MPGRRVRKDVARDVKKPDFVEPVKPVDKPEIAVKKAPLRELAASITLSALSAKKLIDMELSKIRKEYEKDEFLRNFPLPGFEISEMELELNFAVDEVKDGGEVIVSFDEEKLSKLSGAISKMKMKIVGKSLQQFETIDGQKIVK</sequence>
<gene>
    <name type="ordered locus">AF_0414</name>
</gene>
<dbReference type="EMBL" id="AE000782">
    <property type="protein sequence ID" value="AAB90831.1"/>
    <property type="molecule type" value="Genomic_DNA"/>
</dbReference>
<dbReference type="PIR" id="F69301">
    <property type="entry name" value="F69301"/>
</dbReference>
<dbReference type="RefSeq" id="WP_010877921.1">
    <property type="nucleotide sequence ID" value="NC_000917.1"/>
</dbReference>
<dbReference type="STRING" id="224325.AF_0414"/>
<dbReference type="PaxDb" id="224325-AF_0414"/>
<dbReference type="DNASU" id="1483630"/>
<dbReference type="EnsemblBacteria" id="AAB90831">
    <property type="protein sequence ID" value="AAB90831"/>
    <property type="gene ID" value="AF_0414"/>
</dbReference>
<dbReference type="KEGG" id="afu:AF_0414"/>
<dbReference type="HOGENOM" id="CLU_1792010_0_0_2"/>
<dbReference type="Proteomes" id="UP000002199">
    <property type="component" value="Chromosome"/>
</dbReference>
<organism>
    <name type="scientific">Archaeoglobus fulgidus (strain ATCC 49558 / DSM 4304 / JCM 9628 / NBRC 100126 / VC-16)</name>
    <dbReference type="NCBI Taxonomy" id="224325"/>
    <lineage>
        <taxon>Archaea</taxon>
        <taxon>Methanobacteriati</taxon>
        <taxon>Methanobacteriota</taxon>
        <taxon>Archaeoglobi</taxon>
        <taxon>Archaeoglobales</taxon>
        <taxon>Archaeoglobaceae</taxon>
        <taxon>Archaeoglobus</taxon>
    </lineage>
</organism>
<protein>
    <recommendedName>
        <fullName>Uncharacterized protein AF_0414</fullName>
    </recommendedName>
</protein>